<geneLocation type="chloroplast"/>
<sequence length="61" mass="6874">MPNILSLTCICFNSVLCPTSFFFAKLPEAYAIFNPIVDVMPVIPVLFFLLAFVWQAAVSFR</sequence>
<gene>
    <name evidence="1" type="primary">psbK</name>
</gene>
<dbReference type="EMBL" id="EF115542">
    <property type="protein sequence ID" value="ABK79479.1"/>
    <property type="molecule type" value="Genomic_DNA"/>
</dbReference>
<dbReference type="RefSeq" id="YP_899390.1">
    <property type="nucleotide sequence ID" value="NC_008602.1"/>
</dbReference>
<dbReference type="SMR" id="A1E9Q7"/>
<dbReference type="FunCoup" id="A1E9Q7">
    <property type="interactions" value="70"/>
</dbReference>
<dbReference type="STRING" id="4558.A1E9Q7"/>
<dbReference type="GeneID" id="4549100"/>
<dbReference type="KEGG" id="sbi:4549100"/>
<dbReference type="InParanoid" id="A1E9Q7"/>
<dbReference type="OrthoDB" id="1868502at2759"/>
<dbReference type="Proteomes" id="UP000000768">
    <property type="component" value="Chloroplast"/>
</dbReference>
<dbReference type="ExpressionAtlas" id="A1E9Q7">
    <property type="expression patterns" value="baseline and differential"/>
</dbReference>
<dbReference type="GO" id="GO:0009535">
    <property type="term" value="C:chloroplast thylakoid membrane"/>
    <property type="evidence" value="ECO:0007669"/>
    <property type="project" value="UniProtKB-SubCell"/>
</dbReference>
<dbReference type="GO" id="GO:0009539">
    <property type="term" value="C:photosystem II reaction center"/>
    <property type="evidence" value="ECO:0007669"/>
    <property type="project" value="InterPro"/>
</dbReference>
<dbReference type="GO" id="GO:0015979">
    <property type="term" value="P:photosynthesis"/>
    <property type="evidence" value="ECO:0007669"/>
    <property type="project" value="UniProtKB-UniRule"/>
</dbReference>
<dbReference type="HAMAP" id="MF_00441">
    <property type="entry name" value="PSII_PsbK"/>
    <property type="match status" value="1"/>
</dbReference>
<dbReference type="InterPro" id="IPR003687">
    <property type="entry name" value="PSII_PsbK"/>
</dbReference>
<dbReference type="InterPro" id="IPR037270">
    <property type="entry name" value="PSII_PsbK_sf"/>
</dbReference>
<dbReference type="NCBIfam" id="NF002715">
    <property type="entry name" value="PRK02553.1"/>
    <property type="match status" value="1"/>
</dbReference>
<dbReference type="PANTHER" id="PTHR35325">
    <property type="match status" value="1"/>
</dbReference>
<dbReference type="PANTHER" id="PTHR35325:SF1">
    <property type="entry name" value="PHOTOSYSTEM II REACTION CENTER PROTEIN K"/>
    <property type="match status" value="1"/>
</dbReference>
<dbReference type="Pfam" id="PF02533">
    <property type="entry name" value="PsbK"/>
    <property type="match status" value="1"/>
</dbReference>
<dbReference type="SUPFAM" id="SSF161037">
    <property type="entry name" value="Photosystem II reaction center protein K, PsbK"/>
    <property type="match status" value="1"/>
</dbReference>
<comment type="function">
    <text evidence="1">One of the components of the core complex of photosystem II (PSII). PSII is a light-driven water:plastoquinone oxidoreductase that uses light energy to abstract electrons from H(2)O, generating O(2) and a proton gradient subsequently used for ATP formation. It consists of a core antenna complex that captures photons, and an electron transfer chain that converts photonic excitation into a charge separation.</text>
</comment>
<comment type="subunit">
    <text evidence="1">PSII is composed of 1 copy each of membrane proteins PsbA, PsbB, PsbC, PsbD, PsbE, PsbF, PsbH, PsbI, PsbJ, PsbK, PsbL, PsbM, PsbT, PsbX, PsbY, PsbZ, Psb30/Ycf12, at least 3 peripheral proteins of the oxygen-evolving complex and a large number of cofactors. It forms dimeric complexes.</text>
</comment>
<comment type="subcellular location">
    <subcellularLocation>
        <location evidence="1">Plastid</location>
        <location evidence="1">Chloroplast thylakoid membrane</location>
        <topology evidence="1">Single-pass membrane protein</topology>
    </subcellularLocation>
</comment>
<comment type="similarity">
    <text evidence="1">Belongs to the PsbK family.</text>
</comment>
<proteinExistence type="inferred from homology"/>
<evidence type="ECO:0000255" key="1">
    <source>
        <dbReference type="HAMAP-Rule" id="MF_00441"/>
    </source>
</evidence>
<name>PSBK_SORBI</name>
<organism>
    <name type="scientific">Sorghum bicolor</name>
    <name type="common">Sorghum</name>
    <name type="synonym">Sorghum vulgare</name>
    <dbReference type="NCBI Taxonomy" id="4558"/>
    <lineage>
        <taxon>Eukaryota</taxon>
        <taxon>Viridiplantae</taxon>
        <taxon>Streptophyta</taxon>
        <taxon>Embryophyta</taxon>
        <taxon>Tracheophyta</taxon>
        <taxon>Spermatophyta</taxon>
        <taxon>Magnoliopsida</taxon>
        <taxon>Liliopsida</taxon>
        <taxon>Poales</taxon>
        <taxon>Poaceae</taxon>
        <taxon>PACMAD clade</taxon>
        <taxon>Panicoideae</taxon>
        <taxon>Andropogonodae</taxon>
        <taxon>Andropogoneae</taxon>
        <taxon>Sorghinae</taxon>
        <taxon>Sorghum</taxon>
    </lineage>
</organism>
<accession>A1E9Q7</accession>
<protein>
    <recommendedName>
        <fullName evidence="1">Photosystem II reaction center protein K</fullName>
        <shortName evidence="1">PSII-K</shortName>
    </recommendedName>
</protein>
<reference key="1">
    <citation type="journal article" date="2007" name="Theor. Appl. Genet.">
        <title>Complete chloroplast genome sequences of Hordeum vulgare, Sorghum bicolor and Agrostis stolonifera, and comparative analyses with other grass genomes.</title>
        <authorList>
            <person name="Saski C."/>
            <person name="Lee S.-B."/>
            <person name="Fjellheim S."/>
            <person name="Guda C."/>
            <person name="Jansen R.K."/>
            <person name="Luo H."/>
            <person name="Tomkins J."/>
            <person name="Rognli O.A."/>
            <person name="Daniell H."/>
            <person name="Clarke J.L."/>
        </authorList>
    </citation>
    <scope>NUCLEOTIDE SEQUENCE [LARGE SCALE GENOMIC DNA]</scope>
    <source>
        <strain>cv. BTx623</strain>
    </source>
</reference>
<keyword id="KW-0150">Chloroplast</keyword>
<keyword id="KW-0472">Membrane</keyword>
<keyword id="KW-0602">Photosynthesis</keyword>
<keyword id="KW-0604">Photosystem II</keyword>
<keyword id="KW-0934">Plastid</keyword>
<keyword id="KW-0674">Reaction center</keyword>
<keyword id="KW-1185">Reference proteome</keyword>
<keyword id="KW-0793">Thylakoid</keyword>
<keyword id="KW-0812">Transmembrane</keyword>
<keyword id="KW-1133">Transmembrane helix</keyword>
<feature type="propeptide" id="PRO_0000276182" evidence="1">
    <location>
        <begin position="1"/>
        <end position="24"/>
    </location>
</feature>
<feature type="chain" id="PRO_0000276183" description="Photosystem II reaction center protein K" evidence="1">
    <location>
        <begin position="25"/>
        <end position="61"/>
    </location>
</feature>
<feature type="transmembrane region" description="Helical" evidence="1">
    <location>
        <begin position="32"/>
        <end position="52"/>
    </location>
</feature>